<proteinExistence type="inferred from homology"/>
<gene>
    <name evidence="1" type="primary">rplS</name>
    <name type="ordered locus">Mfl539</name>
</gene>
<reference key="1">
    <citation type="submission" date="2004-06" db="EMBL/GenBank/DDBJ databases">
        <authorList>
            <person name="Birren B.W."/>
            <person name="Stange-Thomann N."/>
            <person name="Hafez N."/>
            <person name="DeCaprio D."/>
            <person name="Fisher S."/>
            <person name="Butler J."/>
            <person name="Elkins T."/>
            <person name="Kodira C.D."/>
            <person name="Major J."/>
            <person name="Wang S."/>
            <person name="Nicol R."/>
            <person name="Nusbaum C."/>
        </authorList>
    </citation>
    <scope>NUCLEOTIDE SEQUENCE [LARGE SCALE GENOMIC DNA]</scope>
    <source>
        <strain>ATCC 33453 / NBRC 100688 / NCTC 11704 / L1</strain>
    </source>
</reference>
<name>RL19_MESFL</name>
<keyword id="KW-1185">Reference proteome</keyword>
<keyword id="KW-0687">Ribonucleoprotein</keyword>
<keyword id="KW-0689">Ribosomal protein</keyword>
<feature type="chain" id="PRO_0000163481" description="Large ribosomal subunit protein bL19">
    <location>
        <begin position="1"/>
        <end position="128"/>
    </location>
</feature>
<evidence type="ECO:0000255" key="1">
    <source>
        <dbReference type="HAMAP-Rule" id="MF_00402"/>
    </source>
</evidence>
<evidence type="ECO:0000305" key="2"/>
<dbReference type="EMBL" id="AE017263">
    <property type="protein sequence ID" value="AAT75897.1"/>
    <property type="molecule type" value="Genomic_DNA"/>
</dbReference>
<dbReference type="RefSeq" id="WP_011183437.1">
    <property type="nucleotide sequence ID" value="NC_006055.1"/>
</dbReference>
<dbReference type="RefSeq" id="YP_053781.1">
    <property type="nucleotide sequence ID" value="NC_006055.1"/>
</dbReference>
<dbReference type="SMR" id="Q6F0S6"/>
<dbReference type="STRING" id="265311.Mfl539"/>
<dbReference type="PaxDb" id="265311-Mfl539"/>
<dbReference type="EnsemblBacteria" id="AAT75897">
    <property type="protein sequence ID" value="AAT75897"/>
    <property type="gene ID" value="Mfl539"/>
</dbReference>
<dbReference type="GeneID" id="2897848"/>
<dbReference type="KEGG" id="mfl:Mfl539"/>
<dbReference type="PATRIC" id="fig|265311.5.peg.543"/>
<dbReference type="eggNOG" id="COG0335">
    <property type="taxonomic scope" value="Bacteria"/>
</dbReference>
<dbReference type="HOGENOM" id="CLU_103507_2_1_14"/>
<dbReference type="OrthoDB" id="9803541at2"/>
<dbReference type="Proteomes" id="UP000006647">
    <property type="component" value="Chromosome"/>
</dbReference>
<dbReference type="GO" id="GO:0022625">
    <property type="term" value="C:cytosolic large ribosomal subunit"/>
    <property type="evidence" value="ECO:0007669"/>
    <property type="project" value="TreeGrafter"/>
</dbReference>
<dbReference type="GO" id="GO:0003735">
    <property type="term" value="F:structural constituent of ribosome"/>
    <property type="evidence" value="ECO:0007669"/>
    <property type="project" value="InterPro"/>
</dbReference>
<dbReference type="GO" id="GO:0006412">
    <property type="term" value="P:translation"/>
    <property type="evidence" value="ECO:0007669"/>
    <property type="project" value="UniProtKB-UniRule"/>
</dbReference>
<dbReference type="Gene3D" id="2.30.30.790">
    <property type="match status" value="1"/>
</dbReference>
<dbReference type="HAMAP" id="MF_00402">
    <property type="entry name" value="Ribosomal_bL19"/>
    <property type="match status" value="1"/>
</dbReference>
<dbReference type="InterPro" id="IPR001857">
    <property type="entry name" value="Ribosomal_bL19"/>
</dbReference>
<dbReference type="InterPro" id="IPR018257">
    <property type="entry name" value="Ribosomal_bL19_CS"/>
</dbReference>
<dbReference type="InterPro" id="IPR038657">
    <property type="entry name" value="Ribosomal_bL19_sf"/>
</dbReference>
<dbReference type="InterPro" id="IPR008991">
    <property type="entry name" value="Translation_prot_SH3-like_sf"/>
</dbReference>
<dbReference type="NCBIfam" id="TIGR01024">
    <property type="entry name" value="rplS_bact"/>
    <property type="match status" value="1"/>
</dbReference>
<dbReference type="PANTHER" id="PTHR15680:SF9">
    <property type="entry name" value="LARGE RIBOSOMAL SUBUNIT PROTEIN BL19M"/>
    <property type="match status" value="1"/>
</dbReference>
<dbReference type="PANTHER" id="PTHR15680">
    <property type="entry name" value="RIBOSOMAL PROTEIN L19"/>
    <property type="match status" value="1"/>
</dbReference>
<dbReference type="Pfam" id="PF01245">
    <property type="entry name" value="Ribosomal_L19"/>
    <property type="match status" value="1"/>
</dbReference>
<dbReference type="PIRSF" id="PIRSF002191">
    <property type="entry name" value="Ribosomal_L19"/>
    <property type="match status" value="1"/>
</dbReference>
<dbReference type="PRINTS" id="PR00061">
    <property type="entry name" value="RIBOSOMALL19"/>
</dbReference>
<dbReference type="SUPFAM" id="SSF50104">
    <property type="entry name" value="Translation proteins SH3-like domain"/>
    <property type="match status" value="1"/>
</dbReference>
<dbReference type="PROSITE" id="PS01015">
    <property type="entry name" value="RIBOSOMAL_L19"/>
    <property type="match status" value="1"/>
</dbReference>
<sequence>MASKATKTTQSKYAIINNQLRNDLPDFTSGDTIKVDVKIKEGEKFRIQTFEGLVIKTQGSGITYSVVVRKLSNGVFVERTFPLHSPIIDKVTIVKRGRVRRARIYYIRKLSGKAARIKEILPTKADKK</sequence>
<comment type="function">
    <text evidence="1">This protein is located at the 30S-50S ribosomal subunit interface and may play a role in the structure and function of the aminoacyl-tRNA binding site.</text>
</comment>
<comment type="similarity">
    <text evidence="1">Belongs to the bacterial ribosomal protein bL19 family.</text>
</comment>
<organism>
    <name type="scientific">Mesoplasma florum (strain ATCC 33453 / NBRC 100688 / NCTC 11704 / L1)</name>
    <name type="common">Acholeplasma florum</name>
    <dbReference type="NCBI Taxonomy" id="265311"/>
    <lineage>
        <taxon>Bacteria</taxon>
        <taxon>Bacillati</taxon>
        <taxon>Mycoplasmatota</taxon>
        <taxon>Mollicutes</taxon>
        <taxon>Entomoplasmatales</taxon>
        <taxon>Entomoplasmataceae</taxon>
        <taxon>Mesoplasma</taxon>
    </lineage>
</organism>
<protein>
    <recommendedName>
        <fullName evidence="1">Large ribosomal subunit protein bL19</fullName>
    </recommendedName>
    <alternativeName>
        <fullName evidence="2">50S ribosomal protein L19</fullName>
    </alternativeName>
</protein>
<accession>Q6F0S6</accession>